<gene>
    <name evidence="1" type="primary">ruvB</name>
    <name type="ordered locus">Swol_1431</name>
</gene>
<reference key="1">
    <citation type="journal article" date="2010" name="Environ. Microbiol.">
        <title>The genome of Syntrophomonas wolfei: new insights into syntrophic metabolism and biohydrogen production.</title>
        <authorList>
            <person name="Sieber J.R."/>
            <person name="Sims D.R."/>
            <person name="Han C."/>
            <person name="Kim E."/>
            <person name="Lykidis A."/>
            <person name="Lapidus A.L."/>
            <person name="McDonnald E."/>
            <person name="Rohlin L."/>
            <person name="Culley D.E."/>
            <person name="Gunsalus R."/>
            <person name="McInerney M.J."/>
        </authorList>
    </citation>
    <scope>NUCLEOTIDE SEQUENCE [LARGE SCALE GENOMIC DNA]</scope>
    <source>
        <strain>DSM 2245B / Goettingen</strain>
    </source>
</reference>
<name>RUVB_SYNWW</name>
<dbReference type="EC" id="3.6.4.-" evidence="1"/>
<dbReference type="EMBL" id="CP000448">
    <property type="protein sequence ID" value="ABI68738.1"/>
    <property type="molecule type" value="Genomic_DNA"/>
</dbReference>
<dbReference type="RefSeq" id="WP_011640837.1">
    <property type="nucleotide sequence ID" value="NC_008346.1"/>
</dbReference>
<dbReference type="SMR" id="Q0AX16"/>
<dbReference type="STRING" id="335541.Swol_1431"/>
<dbReference type="KEGG" id="swo:Swol_1431"/>
<dbReference type="eggNOG" id="COG2255">
    <property type="taxonomic scope" value="Bacteria"/>
</dbReference>
<dbReference type="HOGENOM" id="CLU_055599_1_0_9"/>
<dbReference type="Proteomes" id="UP000001968">
    <property type="component" value="Chromosome"/>
</dbReference>
<dbReference type="GO" id="GO:0005737">
    <property type="term" value="C:cytoplasm"/>
    <property type="evidence" value="ECO:0007669"/>
    <property type="project" value="UniProtKB-SubCell"/>
</dbReference>
<dbReference type="GO" id="GO:0048476">
    <property type="term" value="C:Holliday junction resolvase complex"/>
    <property type="evidence" value="ECO:0007669"/>
    <property type="project" value="UniProtKB-UniRule"/>
</dbReference>
<dbReference type="GO" id="GO:0005524">
    <property type="term" value="F:ATP binding"/>
    <property type="evidence" value="ECO:0007669"/>
    <property type="project" value="UniProtKB-UniRule"/>
</dbReference>
<dbReference type="GO" id="GO:0016887">
    <property type="term" value="F:ATP hydrolysis activity"/>
    <property type="evidence" value="ECO:0007669"/>
    <property type="project" value="InterPro"/>
</dbReference>
<dbReference type="GO" id="GO:0000400">
    <property type="term" value="F:four-way junction DNA binding"/>
    <property type="evidence" value="ECO:0007669"/>
    <property type="project" value="UniProtKB-UniRule"/>
</dbReference>
<dbReference type="GO" id="GO:0009378">
    <property type="term" value="F:four-way junction helicase activity"/>
    <property type="evidence" value="ECO:0007669"/>
    <property type="project" value="InterPro"/>
</dbReference>
<dbReference type="GO" id="GO:0006310">
    <property type="term" value="P:DNA recombination"/>
    <property type="evidence" value="ECO:0007669"/>
    <property type="project" value="UniProtKB-UniRule"/>
</dbReference>
<dbReference type="GO" id="GO:0006281">
    <property type="term" value="P:DNA repair"/>
    <property type="evidence" value="ECO:0007669"/>
    <property type="project" value="UniProtKB-UniRule"/>
</dbReference>
<dbReference type="CDD" id="cd00009">
    <property type="entry name" value="AAA"/>
    <property type="match status" value="1"/>
</dbReference>
<dbReference type="Gene3D" id="1.10.8.60">
    <property type="match status" value="1"/>
</dbReference>
<dbReference type="Gene3D" id="3.40.50.300">
    <property type="entry name" value="P-loop containing nucleotide triphosphate hydrolases"/>
    <property type="match status" value="1"/>
</dbReference>
<dbReference type="Gene3D" id="1.10.10.10">
    <property type="entry name" value="Winged helix-like DNA-binding domain superfamily/Winged helix DNA-binding domain"/>
    <property type="match status" value="1"/>
</dbReference>
<dbReference type="HAMAP" id="MF_00016">
    <property type="entry name" value="DNA_HJ_migration_RuvB"/>
    <property type="match status" value="1"/>
</dbReference>
<dbReference type="InterPro" id="IPR003593">
    <property type="entry name" value="AAA+_ATPase"/>
</dbReference>
<dbReference type="InterPro" id="IPR041445">
    <property type="entry name" value="AAA_lid_4"/>
</dbReference>
<dbReference type="InterPro" id="IPR004605">
    <property type="entry name" value="DNA_helicase_Holl-junc_RuvB"/>
</dbReference>
<dbReference type="InterPro" id="IPR027417">
    <property type="entry name" value="P-loop_NTPase"/>
</dbReference>
<dbReference type="InterPro" id="IPR008824">
    <property type="entry name" value="RuvB-like_N"/>
</dbReference>
<dbReference type="InterPro" id="IPR008823">
    <property type="entry name" value="RuvB_C"/>
</dbReference>
<dbReference type="InterPro" id="IPR036388">
    <property type="entry name" value="WH-like_DNA-bd_sf"/>
</dbReference>
<dbReference type="InterPro" id="IPR036390">
    <property type="entry name" value="WH_DNA-bd_sf"/>
</dbReference>
<dbReference type="NCBIfam" id="NF000868">
    <property type="entry name" value="PRK00080.1"/>
    <property type="match status" value="1"/>
</dbReference>
<dbReference type="NCBIfam" id="TIGR00635">
    <property type="entry name" value="ruvB"/>
    <property type="match status" value="1"/>
</dbReference>
<dbReference type="PANTHER" id="PTHR42848">
    <property type="match status" value="1"/>
</dbReference>
<dbReference type="PANTHER" id="PTHR42848:SF1">
    <property type="entry name" value="HOLLIDAY JUNCTION BRANCH MIGRATION COMPLEX SUBUNIT RUVB"/>
    <property type="match status" value="1"/>
</dbReference>
<dbReference type="Pfam" id="PF17864">
    <property type="entry name" value="AAA_lid_4"/>
    <property type="match status" value="1"/>
</dbReference>
<dbReference type="Pfam" id="PF05491">
    <property type="entry name" value="RuvB_C"/>
    <property type="match status" value="1"/>
</dbReference>
<dbReference type="Pfam" id="PF05496">
    <property type="entry name" value="RuvB_N"/>
    <property type="match status" value="1"/>
</dbReference>
<dbReference type="SMART" id="SM00382">
    <property type="entry name" value="AAA"/>
    <property type="match status" value="1"/>
</dbReference>
<dbReference type="SUPFAM" id="SSF52540">
    <property type="entry name" value="P-loop containing nucleoside triphosphate hydrolases"/>
    <property type="match status" value="1"/>
</dbReference>
<dbReference type="SUPFAM" id="SSF46785">
    <property type="entry name" value="Winged helix' DNA-binding domain"/>
    <property type="match status" value="1"/>
</dbReference>
<evidence type="ECO:0000255" key="1">
    <source>
        <dbReference type="HAMAP-Rule" id="MF_00016"/>
    </source>
</evidence>
<keyword id="KW-0067">ATP-binding</keyword>
<keyword id="KW-0963">Cytoplasm</keyword>
<keyword id="KW-0227">DNA damage</keyword>
<keyword id="KW-0233">DNA recombination</keyword>
<keyword id="KW-0234">DNA repair</keyword>
<keyword id="KW-0238">DNA-binding</keyword>
<keyword id="KW-0378">Hydrolase</keyword>
<keyword id="KW-0547">Nucleotide-binding</keyword>
<keyword id="KW-1185">Reference proteome</keyword>
<sequence>MLDERLISSHLLDEDDNNENSIRPGRLSEYIGQEKVKENVEVFITAARERKESLDHVLLSGPPGLGKTTLASIIANEVGKPIRKTSGPAIERPGDLAAILTNLEPGEVLFIDEIHRLNRNVEEIMYPAMEDYVIDIIIGKGPAARTLRLDLPPFTLIGATTRPGLLSSPLRDRFGISCRLDFYTPLELSEIILRAARILEISLDKEGATEIAGRSRGTPRVANRLLRRVRDYALVKGNGNIDFSLAKWALEMLEIDECGLDVMDRMILEAIIGKFSGGPVGLDTLAASVSEESDTISDVYEPYLLKLGFIQKTPRGRMATEHAYRHLGYPLKGNLEGKGLFSDA</sequence>
<protein>
    <recommendedName>
        <fullName evidence="1">Holliday junction branch migration complex subunit RuvB</fullName>
        <ecNumber evidence="1">3.6.4.-</ecNumber>
    </recommendedName>
</protein>
<accession>Q0AX16</accession>
<proteinExistence type="inferred from homology"/>
<feature type="chain" id="PRO_1000001494" description="Holliday junction branch migration complex subunit RuvB">
    <location>
        <begin position="1"/>
        <end position="344"/>
    </location>
</feature>
<feature type="region of interest" description="Large ATPase domain (RuvB-L)" evidence="1">
    <location>
        <begin position="1"/>
        <end position="183"/>
    </location>
</feature>
<feature type="region of interest" description="Small ATPAse domain (RuvB-S)" evidence="1">
    <location>
        <begin position="184"/>
        <end position="254"/>
    </location>
</feature>
<feature type="region of interest" description="Head domain (RuvB-H)" evidence="1">
    <location>
        <begin position="257"/>
        <end position="344"/>
    </location>
</feature>
<feature type="binding site" evidence="1">
    <location>
        <position position="22"/>
    </location>
    <ligand>
        <name>ATP</name>
        <dbReference type="ChEBI" id="CHEBI:30616"/>
    </ligand>
</feature>
<feature type="binding site" evidence="1">
    <location>
        <position position="23"/>
    </location>
    <ligand>
        <name>ATP</name>
        <dbReference type="ChEBI" id="CHEBI:30616"/>
    </ligand>
</feature>
<feature type="binding site" evidence="1">
    <location>
        <position position="64"/>
    </location>
    <ligand>
        <name>ATP</name>
        <dbReference type="ChEBI" id="CHEBI:30616"/>
    </ligand>
</feature>
<feature type="binding site" evidence="1">
    <location>
        <position position="67"/>
    </location>
    <ligand>
        <name>ATP</name>
        <dbReference type="ChEBI" id="CHEBI:30616"/>
    </ligand>
</feature>
<feature type="binding site" evidence="1">
    <location>
        <position position="68"/>
    </location>
    <ligand>
        <name>ATP</name>
        <dbReference type="ChEBI" id="CHEBI:30616"/>
    </ligand>
</feature>
<feature type="binding site" evidence="1">
    <location>
        <position position="68"/>
    </location>
    <ligand>
        <name>Mg(2+)</name>
        <dbReference type="ChEBI" id="CHEBI:18420"/>
    </ligand>
</feature>
<feature type="binding site" evidence="1">
    <location>
        <position position="69"/>
    </location>
    <ligand>
        <name>ATP</name>
        <dbReference type="ChEBI" id="CHEBI:30616"/>
    </ligand>
</feature>
<feature type="binding site" evidence="1">
    <location>
        <begin position="130"/>
        <end position="132"/>
    </location>
    <ligand>
        <name>ATP</name>
        <dbReference type="ChEBI" id="CHEBI:30616"/>
    </ligand>
</feature>
<feature type="binding site" evidence="1">
    <location>
        <position position="173"/>
    </location>
    <ligand>
        <name>ATP</name>
        <dbReference type="ChEBI" id="CHEBI:30616"/>
    </ligand>
</feature>
<feature type="binding site" evidence="1">
    <location>
        <position position="183"/>
    </location>
    <ligand>
        <name>ATP</name>
        <dbReference type="ChEBI" id="CHEBI:30616"/>
    </ligand>
</feature>
<feature type="binding site" evidence="1">
    <location>
        <position position="220"/>
    </location>
    <ligand>
        <name>ATP</name>
        <dbReference type="ChEBI" id="CHEBI:30616"/>
    </ligand>
</feature>
<feature type="binding site" evidence="1">
    <location>
        <position position="312"/>
    </location>
    <ligand>
        <name>DNA</name>
        <dbReference type="ChEBI" id="CHEBI:16991"/>
    </ligand>
</feature>
<feature type="binding site" evidence="1">
    <location>
        <position position="317"/>
    </location>
    <ligand>
        <name>DNA</name>
        <dbReference type="ChEBI" id="CHEBI:16991"/>
    </ligand>
</feature>
<organism>
    <name type="scientific">Syntrophomonas wolfei subsp. wolfei (strain DSM 2245B / Goettingen)</name>
    <dbReference type="NCBI Taxonomy" id="335541"/>
    <lineage>
        <taxon>Bacteria</taxon>
        <taxon>Bacillati</taxon>
        <taxon>Bacillota</taxon>
        <taxon>Clostridia</taxon>
        <taxon>Eubacteriales</taxon>
        <taxon>Syntrophomonadaceae</taxon>
        <taxon>Syntrophomonas</taxon>
    </lineage>
</organism>
<comment type="function">
    <text evidence="1">The RuvA-RuvB-RuvC complex processes Holliday junction (HJ) DNA during genetic recombination and DNA repair, while the RuvA-RuvB complex plays an important role in the rescue of blocked DNA replication forks via replication fork reversal (RFR). RuvA specifically binds to HJ cruciform DNA, conferring on it an open structure. The RuvB hexamer acts as an ATP-dependent pump, pulling dsDNA into and through the RuvAB complex. RuvB forms 2 homohexamers on either side of HJ DNA bound by 1 or 2 RuvA tetramers; 4 subunits per hexamer contact DNA at a time. Coordinated motions by a converter formed by DNA-disengaged RuvB subunits stimulates ATP hydrolysis and nucleotide exchange. Immobilization of the converter enables RuvB to convert the ATP-contained energy into a lever motion, pulling 2 nucleotides of DNA out of the RuvA tetramer per ATP hydrolyzed, thus driving DNA branch migration. The RuvB motors rotate together with the DNA substrate, which together with the progressing nucleotide cycle form the mechanistic basis for DNA recombination by continuous HJ branch migration. Branch migration allows RuvC to scan DNA until it finds its consensus sequence, where it cleaves and resolves cruciform DNA.</text>
</comment>
<comment type="catalytic activity">
    <reaction evidence="1">
        <text>ATP + H2O = ADP + phosphate + H(+)</text>
        <dbReference type="Rhea" id="RHEA:13065"/>
        <dbReference type="ChEBI" id="CHEBI:15377"/>
        <dbReference type="ChEBI" id="CHEBI:15378"/>
        <dbReference type="ChEBI" id="CHEBI:30616"/>
        <dbReference type="ChEBI" id="CHEBI:43474"/>
        <dbReference type="ChEBI" id="CHEBI:456216"/>
    </reaction>
</comment>
<comment type="subunit">
    <text evidence="1">Homohexamer. Forms an RuvA(8)-RuvB(12)-Holliday junction (HJ) complex. HJ DNA is sandwiched between 2 RuvA tetramers; dsDNA enters through RuvA and exits via RuvB. An RuvB hexamer assembles on each DNA strand where it exits the tetramer. Each RuvB hexamer is contacted by two RuvA subunits (via domain III) on 2 adjacent RuvB subunits; this complex drives branch migration. In the full resolvosome a probable DNA-RuvA(4)-RuvB(12)-RuvC(2) complex forms which resolves the HJ.</text>
</comment>
<comment type="subcellular location">
    <subcellularLocation>
        <location evidence="1">Cytoplasm</location>
    </subcellularLocation>
</comment>
<comment type="domain">
    <text evidence="1">Has 3 domains, the large (RuvB-L) and small ATPase (RuvB-S) domains and the C-terminal head (RuvB-H) domain. The head domain binds DNA, while the ATPase domains jointly bind ATP, ADP or are empty depending on the state of the subunit in the translocation cycle. During a single DNA translocation step the structure of each domain remains the same, but their relative positions change.</text>
</comment>
<comment type="similarity">
    <text evidence="1">Belongs to the RuvB family.</text>
</comment>